<proteinExistence type="inferred from homology"/>
<evidence type="ECO:0000255" key="1">
    <source>
        <dbReference type="HAMAP-Rule" id="MF_00142"/>
    </source>
</evidence>
<accession>Q7VT96</accession>
<reference key="1">
    <citation type="journal article" date="2003" name="Nat. Genet.">
        <title>Comparative analysis of the genome sequences of Bordetella pertussis, Bordetella parapertussis and Bordetella bronchiseptica.</title>
        <authorList>
            <person name="Parkhill J."/>
            <person name="Sebaihia M."/>
            <person name="Preston A."/>
            <person name="Murphy L.D."/>
            <person name="Thomson N.R."/>
            <person name="Harris D.E."/>
            <person name="Holden M.T.G."/>
            <person name="Churcher C.M."/>
            <person name="Bentley S.D."/>
            <person name="Mungall K.L."/>
            <person name="Cerdeno-Tarraga A.-M."/>
            <person name="Temple L."/>
            <person name="James K.D."/>
            <person name="Harris B."/>
            <person name="Quail M.A."/>
            <person name="Achtman M."/>
            <person name="Atkin R."/>
            <person name="Baker S."/>
            <person name="Basham D."/>
            <person name="Bason N."/>
            <person name="Cherevach I."/>
            <person name="Chillingworth T."/>
            <person name="Collins M."/>
            <person name="Cronin A."/>
            <person name="Davis P."/>
            <person name="Doggett J."/>
            <person name="Feltwell T."/>
            <person name="Goble A."/>
            <person name="Hamlin N."/>
            <person name="Hauser H."/>
            <person name="Holroyd S."/>
            <person name="Jagels K."/>
            <person name="Leather S."/>
            <person name="Moule S."/>
            <person name="Norberczak H."/>
            <person name="O'Neil S."/>
            <person name="Ormond D."/>
            <person name="Price C."/>
            <person name="Rabbinowitsch E."/>
            <person name="Rutter S."/>
            <person name="Sanders M."/>
            <person name="Saunders D."/>
            <person name="Seeger K."/>
            <person name="Sharp S."/>
            <person name="Simmonds M."/>
            <person name="Skelton J."/>
            <person name="Squares R."/>
            <person name="Squares S."/>
            <person name="Stevens K."/>
            <person name="Unwin L."/>
            <person name="Whitehead S."/>
            <person name="Barrell B.G."/>
            <person name="Maskell D.J."/>
        </authorList>
    </citation>
    <scope>NUCLEOTIDE SEQUENCE [LARGE SCALE GENOMIC DNA]</scope>
    <source>
        <strain>Tohama I / ATCC BAA-589 / NCTC 13251</strain>
    </source>
</reference>
<sequence length="109" mass="11849">MTETEFLALVDQVLDSIESQADDWAAGLDVDIEATRSGNVLTLVFEDGTQVVVNVQAAMQELWVAARSGGFHYRYDGQHWNDTRGGPRLPDALSQICSEAAGVPVSVRL</sequence>
<name>CYAY_BORPE</name>
<keyword id="KW-0408">Iron</keyword>
<keyword id="KW-0479">Metal-binding</keyword>
<keyword id="KW-1185">Reference proteome</keyword>
<feature type="chain" id="PRO_0000193929" description="Iron-sulfur cluster assembly protein CyaY">
    <location>
        <begin position="1"/>
        <end position="109"/>
    </location>
</feature>
<organism>
    <name type="scientific">Bordetella pertussis (strain Tohama I / ATCC BAA-589 / NCTC 13251)</name>
    <dbReference type="NCBI Taxonomy" id="257313"/>
    <lineage>
        <taxon>Bacteria</taxon>
        <taxon>Pseudomonadati</taxon>
        <taxon>Pseudomonadota</taxon>
        <taxon>Betaproteobacteria</taxon>
        <taxon>Burkholderiales</taxon>
        <taxon>Alcaligenaceae</taxon>
        <taxon>Bordetella</taxon>
    </lineage>
</organism>
<gene>
    <name evidence="1" type="primary">cyaY</name>
    <name type="ordered locus">BP3654</name>
</gene>
<dbReference type="EMBL" id="BX640422">
    <property type="protein sequence ID" value="CAE43911.1"/>
    <property type="molecule type" value="Genomic_DNA"/>
</dbReference>
<dbReference type="RefSeq" id="NP_882162.1">
    <property type="nucleotide sequence ID" value="NC_002929.2"/>
</dbReference>
<dbReference type="RefSeq" id="WP_010931575.1">
    <property type="nucleotide sequence ID" value="NZ_CP039022.1"/>
</dbReference>
<dbReference type="SMR" id="Q7VT96"/>
<dbReference type="STRING" id="257313.BP3654"/>
<dbReference type="PaxDb" id="257313-BP3654"/>
<dbReference type="GeneID" id="69600118"/>
<dbReference type="KEGG" id="bpe:BP3654"/>
<dbReference type="PATRIC" id="fig|257313.5.peg.3952"/>
<dbReference type="eggNOG" id="COG1965">
    <property type="taxonomic scope" value="Bacteria"/>
</dbReference>
<dbReference type="HOGENOM" id="CLU_080880_3_0_4"/>
<dbReference type="Proteomes" id="UP000002676">
    <property type="component" value="Chromosome"/>
</dbReference>
<dbReference type="GO" id="GO:0005737">
    <property type="term" value="C:cytoplasm"/>
    <property type="evidence" value="ECO:0007669"/>
    <property type="project" value="UniProtKB-ARBA"/>
</dbReference>
<dbReference type="GO" id="GO:0008199">
    <property type="term" value="F:ferric iron binding"/>
    <property type="evidence" value="ECO:0007669"/>
    <property type="project" value="InterPro"/>
</dbReference>
<dbReference type="GO" id="GO:0016226">
    <property type="term" value="P:iron-sulfur cluster assembly"/>
    <property type="evidence" value="ECO:0007669"/>
    <property type="project" value="UniProtKB-UniRule"/>
</dbReference>
<dbReference type="Gene3D" id="3.30.920.10">
    <property type="entry name" value="Frataxin/CyaY"/>
    <property type="match status" value="1"/>
</dbReference>
<dbReference type="HAMAP" id="MF_00142">
    <property type="entry name" value="CyaY"/>
    <property type="match status" value="1"/>
</dbReference>
<dbReference type="InterPro" id="IPR047584">
    <property type="entry name" value="CyaY"/>
</dbReference>
<dbReference type="InterPro" id="IPR002908">
    <property type="entry name" value="Frataxin/CyaY"/>
</dbReference>
<dbReference type="InterPro" id="IPR036524">
    <property type="entry name" value="Frataxin/CyaY_sf"/>
</dbReference>
<dbReference type="InterPro" id="IPR020895">
    <property type="entry name" value="Frataxin_CS"/>
</dbReference>
<dbReference type="NCBIfam" id="TIGR03421">
    <property type="entry name" value="FeS_CyaY"/>
    <property type="match status" value="1"/>
</dbReference>
<dbReference type="Pfam" id="PF01491">
    <property type="entry name" value="Frataxin_Cyay"/>
    <property type="match status" value="1"/>
</dbReference>
<dbReference type="SMART" id="SM01219">
    <property type="entry name" value="Frataxin_Cyay"/>
    <property type="match status" value="1"/>
</dbReference>
<dbReference type="SUPFAM" id="SSF55387">
    <property type="entry name" value="Frataxin/Nqo15-like"/>
    <property type="match status" value="1"/>
</dbReference>
<dbReference type="PROSITE" id="PS01344">
    <property type="entry name" value="FRATAXIN_1"/>
    <property type="match status" value="1"/>
</dbReference>
<dbReference type="PROSITE" id="PS50810">
    <property type="entry name" value="FRATAXIN_2"/>
    <property type="match status" value="1"/>
</dbReference>
<comment type="function">
    <text evidence="1">Involved in iron-sulfur (Fe-S) cluster assembly. May act as a regulator of Fe-S biogenesis.</text>
</comment>
<comment type="similarity">
    <text evidence="1">Belongs to the frataxin family.</text>
</comment>
<protein>
    <recommendedName>
        <fullName evidence="1">Iron-sulfur cluster assembly protein CyaY</fullName>
    </recommendedName>
</protein>